<accession>Q5PDW9</accession>
<gene>
    <name evidence="1" type="primary">mdtD</name>
    <name type="ordered locus">SPA0736</name>
</gene>
<evidence type="ECO:0000255" key="1">
    <source>
        <dbReference type="HAMAP-Rule" id="MF_01577"/>
    </source>
</evidence>
<keyword id="KW-0997">Cell inner membrane</keyword>
<keyword id="KW-1003">Cell membrane</keyword>
<keyword id="KW-0472">Membrane</keyword>
<keyword id="KW-0812">Transmembrane</keyword>
<keyword id="KW-1133">Transmembrane helix</keyword>
<keyword id="KW-0813">Transport</keyword>
<name>MDTD_SALPA</name>
<comment type="subcellular location">
    <subcellularLocation>
        <location evidence="1">Cell inner membrane</location>
        <topology evidence="1">Multi-pass membrane protein</topology>
    </subcellularLocation>
</comment>
<comment type="similarity">
    <text evidence="1">Belongs to the major facilitator superfamily. TCR/Tet family.</text>
</comment>
<sequence length="470" mass="50753">MTELPDNTRWQLWIVAFGFFMQSLDTTIVNTALPSMAKSLGESPLHMHMVVVSYVLTVAVMLPASGWLADKIGVRNIFFAAIVLFTLGSLFCALSGTLNQLVLARVLQGVGGAMMVPVGRLTVMKIVPRAQYMAAMTFVTLPGQIGPLLGPALGGVLVEYASWHWIFLINIPVGIVGAMATFMLMPNYTIETRRFDLPGFLLLAIGMAVLTLALDGSKSMGISPWTLAGLAAGGAAAILLYLFHAKKSSGALFSLRLFRTPTFSLGLLGSFAGRIGSGMLPFMTPVFLQIGLGFSPFHAGLMMIPMVLGSMGMKRIVVQIVNRFGYRRVLVATTLGLALVSLLFMSVALLGWYYLLPLVLLLQGMVNSARFSSMNTLTLKDLPDTLASSGNSLLSMIMQLSMSIGVTIAGMLLGMFGQQHIGIDSSATHHVFMYTWLCMAVIIALPAIIFARVPNDTQQNMVISRRKRSL</sequence>
<proteinExistence type="inferred from homology"/>
<protein>
    <recommendedName>
        <fullName evidence="1">Putative multidrug resistance protein MdtD</fullName>
    </recommendedName>
</protein>
<organism>
    <name type="scientific">Salmonella paratyphi A (strain ATCC 9150 / SARB42)</name>
    <dbReference type="NCBI Taxonomy" id="295319"/>
    <lineage>
        <taxon>Bacteria</taxon>
        <taxon>Pseudomonadati</taxon>
        <taxon>Pseudomonadota</taxon>
        <taxon>Gammaproteobacteria</taxon>
        <taxon>Enterobacterales</taxon>
        <taxon>Enterobacteriaceae</taxon>
        <taxon>Salmonella</taxon>
    </lineage>
</organism>
<feature type="chain" id="PRO_0000268596" description="Putative multidrug resistance protein MdtD">
    <location>
        <begin position="1"/>
        <end position="470"/>
    </location>
</feature>
<feature type="topological domain" description="Periplasmic" evidence="1">
    <location>
        <begin position="1"/>
        <end position="11"/>
    </location>
</feature>
<feature type="transmembrane region" description="Helical" evidence="1">
    <location>
        <begin position="12"/>
        <end position="32"/>
    </location>
</feature>
<feature type="topological domain" description="Cytoplasmic" evidence="1">
    <location>
        <begin position="33"/>
        <end position="48"/>
    </location>
</feature>
<feature type="transmembrane region" description="Helical" evidence="1">
    <location>
        <begin position="49"/>
        <end position="69"/>
    </location>
</feature>
<feature type="topological domain" description="Periplasmic" evidence="1">
    <location>
        <begin position="70"/>
        <end position="76"/>
    </location>
</feature>
<feature type="transmembrane region" description="Helical" evidence="1">
    <location>
        <begin position="77"/>
        <end position="97"/>
    </location>
</feature>
<feature type="topological domain" description="Cytoplasmic" evidence="1">
    <location>
        <begin position="98"/>
        <end position="101"/>
    </location>
</feature>
<feature type="transmembrane region" description="Helical" evidence="1">
    <location>
        <begin position="102"/>
        <end position="124"/>
    </location>
</feature>
<feature type="topological domain" description="Periplasmic" evidence="1">
    <location>
        <begin position="125"/>
        <end position="137"/>
    </location>
</feature>
<feature type="transmembrane region" description="Helical" evidence="1">
    <location>
        <begin position="138"/>
        <end position="158"/>
    </location>
</feature>
<feature type="topological domain" description="Cytoplasmic" evidence="1">
    <location>
        <begin position="159"/>
        <end position="164"/>
    </location>
</feature>
<feature type="transmembrane region" description="Helical" evidence="1">
    <location>
        <begin position="165"/>
        <end position="185"/>
    </location>
</feature>
<feature type="topological domain" description="Periplasmic" evidence="1">
    <location>
        <begin position="186"/>
        <end position="196"/>
    </location>
</feature>
<feature type="transmembrane region" description="Helical" evidence="1">
    <location>
        <begin position="197"/>
        <end position="217"/>
    </location>
</feature>
<feature type="topological domain" description="Cytoplasmic" evidence="1">
    <location>
        <begin position="218"/>
        <end position="224"/>
    </location>
</feature>
<feature type="transmembrane region" description="Helical" evidence="1">
    <location>
        <begin position="225"/>
        <end position="245"/>
    </location>
</feature>
<feature type="topological domain" description="Periplasmic" evidence="1">
    <location>
        <begin position="246"/>
        <end position="262"/>
    </location>
</feature>
<feature type="transmembrane region" description="Helical" evidence="1">
    <location>
        <begin position="263"/>
        <end position="283"/>
    </location>
</feature>
<feature type="topological domain" description="Cytoplasmic" evidence="1">
    <location>
        <begin position="284"/>
        <end position="285"/>
    </location>
</feature>
<feature type="transmembrane region" description="Helical" evidence="1">
    <location>
        <begin position="286"/>
        <end position="306"/>
    </location>
</feature>
<feature type="topological domain" description="Periplasmic" evidence="1">
    <location>
        <begin position="307"/>
        <end position="341"/>
    </location>
</feature>
<feature type="transmembrane region" description="Helical" evidence="1">
    <location>
        <begin position="342"/>
        <end position="362"/>
    </location>
</feature>
<feature type="topological domain" description="Cytoplasmic" evidence="1">
    <location>
        <begin position="363"/>
        <end position="395"/>
    </location>
</feature>
<feature type="transmembrane region" description="Helical" evidence="1">
    <location>
        <begin position="396"/>
        <end position="416"/>
    </location>
</feature>
<feature type="topological domain" description="Periplasmic" evidence="1">
    <location>
        <begin position="417"/>
        <end position="430"/>
    </location>
</feature>
<feature type="transmembrane region" description="Helical" evidence="1">
    <location>
        <begin position="431"/>
        <end position="451"/>
    </location>
</feature>
<feature type="topological domain" description="Cytoplasmic" evidence="1">
    <location>
        <begin position="452"/>
        <end position="470"/>
    </location>
</feature>
<reference key="1">
    <citation type="journal article" date="2004" name="Nat. Genet.">
        <title>Comparison of genome degradation in Paratyphi A and Typhi, human-restricted serovars of Salmonella enterica that cause typhoid.</title>
        <authorList>
            <person name="McClelland M."/>
            <person name="Sanderson K.E."/>
            <person name="Clifton S.W."/>
            <person name="Latreille P."/>
            <person name="Porwollik S."/>
            <person name="Sabo A."/>
            <person name="Meyer R."/>
            <person name="Bieri T."/>
            <person name="Ozersky P."/>
            <person name="McLellan M."/>
            <person name="Harkins C.R."/>
            <person name="Wang C."/>
            <person name="Nguyen C."/>
            <person name="Berghoff A."/>
            <person name="Elliott G."/>
            <person name="Kohlberg S."/>
            <person name="Strong C."/>
            <person name="Du F."/>
            <person name="Carter J."/>
            <person name="Kremizki C."/>
            <person name="Layman D."/>
            <person name="Leonard S."/>
            <person name="Sun H."/>
            <person name="Fulton L."/>
            <person name="Nash W."/>
            <person name="Miner T."/>
            <person name="Minx P."/>
            <person name="Delehaunty K."/>
            <person name="Fronick C."/>
            <person name="Magrini V."/>
            <person name="Nhan M."/>
            <person name="Warren W."/>
            <person name="Florea L."/>
            <person name="Spieth J."/>
            <person name="Wilson R.K."/>
        </authorList>
    </citation>
    <scope>NUCLEOTIDE SEQUENCE [LARGE SCALE GENOMIC DNA]</scope>
    <source>
        <strain>ATCC 9150 / SARB42</strain>
    </source>
</reference>
<dbReference type="EMBL" id="CP000026">
    <property type="protein sequence ID" value="AAV76734.1"/>
    <property type="molecule type" value="Genomic_DNA"/>
</dbReference>
<dbReference type="RefSeq" id="WP_000137820.1">
    <property type="nucleotide sequence ID" value="NC_006511.1"/>
</dbReference>
<dbReference type="SMR" id="Q5PDW9"/>
<dbReference type="KEGG" id="spt:SPA0736"/>
<dbReference type="HOGENOM" id="CLU_000960_28_0_6"/>
<dbReference type="Proteomes" id="UP000008185">
    <property type="component" value="Chromosome"/>
</dbReference>
<dbReference type="GO" id="GO:0005886">
    <property type="term" value="C:plasma membrane"/>
    <property type="evidence" value="ECO:0007669"/>
    <property type="project" value="UniProtKB-SubCell"/>
</dbReference>
<dbReference type="GO" id="GO:0022857">
    <property type="term" value="F:transmembrane transporter activity"/>
    <property type="evidence" value="ECO:0007669"/>
    <property type="project" value="UniProtKB-UniRule"/>
</dbReference>
<dbReference type="CDD" id="cd17503">
    <property type="entry name" value="MFS_LmrB_MDR_like"/>
    <property type="match status" value="1"/>
</dbReference>
<dbReference type="FunFam" id="1.20.1250.20:FF:000021">
    <property type="entry name" value="Putative multidrug resistance protein MdtD"/>
    <property type="match status" value="1"/>
</dbReference>
<dbReference type="FunFam" id="1.20.1720.10:FF:000001">
    <property type="entry name" value="Putative multidrug resistance protein MdtD"/>
    <property type="match status" value="1"/>
</dbReference>
<dbReference type="Gene3D" id="1.20.1250.20">
    <property type="entry name" value="MFS general substrate transporter like domains"/>
    <property type="match status" value="1"/>
</dbReference>
<dbReference type="Gene3D" id="1.20.1720.10">
    <property type="entry name" value="Multidrug resistance protein D"/>
    <property type="match status" value="1"/>
</dbReference>
<dbReference type="HAMAP" id="MF_01577">
    <property type="entry name" value="MFS_MdtD"/>
    <property type="match status" value="1"/>
</dbReference>
<dbReference type="InterPro" id="IPR011701">
    <property type="entry name" value="MFS"/>
</dbReference>
<dbReference type="InterPro" id="IPR020846">
    <property type="entry name" value="MFS_dom"/>
</dbReference>
<dbReference type="InterPro" id="IPR036259">
    <property type="entry name" value="MFS_trans_sf"/>
</dbReference>
<dbReference type="InterPro" id="IPR023721">
    <property type="entry name" value="Multi-R_MdtD"/>
</dbReference>
<dbReference type="NCBIfam" id="NF007799">
    <property type="entry name" value="PRK10504.1"/>
    <property type="match status" value="1"/>
</dbReference>
<dbReference type="PANTHER" id="PTHR42718:SF46">
    <property type="entry name" value="BLR6921 PROTEIN"/>
    <property type="match status" value="1"/>
</dbReference>
<dbReference type="PANTHER" id="PTHR42718">
    <property type="entry name" value="MAJOR FACILITATOR SUPERFAMILY MULTIDRUG TRANSPORTER MFSC"/>
    <property type="match status" value="1"/>
</dbReference>
<dbReference type="Pfam" id="PF07690">
    <property type="entry name" value="MFS_1"/>
    <property type="match status" value="1"/>
</dbReference>
<dbReference type="PRINTS" id="PR01036">
    <property type="entry name" value="TCRTETB"/>
</dbReference>
<dbReference type="SUPFAM" id="SSF103473">
    <property type="entry name" value="MFS general substrate transporter"/>
    <property type="match status" value="1"/>
</dbReference>
<dbReference type="PROSITE" id="PS50850">
    <property type="entry name" value="MFS"/>
    <property type="match status" value="1"/>
</dbReference>